<name>UBP25_ARATH</name>
<evidence type="ECO:0000250" key="1"/>
<evidence type="ECO:0000255" key="2">
    <source>
        <dbReference type="PROSITE-ProRule" id="PRU10092"/>
    </source>
</evidence>
<evidence type="ECO:0000255" key="3">
    <source>
        <dbReference type="PROSITE-ProRule" id="PRU10093"/>
    </source>
</evidence>
<evidence type="ECO:0000256" key="4">
    <source>
        <dbReference type="SAM" id="MobiDB-lite"/>
    </source>
</evidence>
<evidence type="ECO:0000305" key="5"/>
<organism>
    <name type="scientific">Arabidopsis thaliana</name>
    <name type="common">Mouse-ear cress</name>
    <dbReference type="NCBI Taxonomy" id="3702"/>
    <lineage>
        <taxon>Eukaryota</taxon>
        <taxon>Viridiplantae</taxon>
        <taxon>Streptophyta</taxon>
        <taxon>Embryophyta</taxon>
        <taxon>Tracheophyta</taxon>
        <taxon>Spermatophyta</taxon>
        <taxon>Magnoliopsida</taxon>
        <taxon>eudicotyledons</taxon>
        <taxon>Gunneridae</taxon>
        <taxon>Pentapetalae</taxon>
        <taxon>rosids</taxon>
        <taxon>malvids</taxon>
        <taxon>Brassicales</taxon>
        <taxon>Brassicaceae</taxon>
        <taxon>Camelineae</taxon>
        <taxon>Arabidopsis</taxon>
    </lineage>
</organism>
<comment type="function">
    <text evidence="1">Recognizes and hydrolyzes the peptide bond at the C-terminal Gly of ubiquitin. Involved in the processing of poly-ubiquitin precursors as well as that of ubiquitinated proteins (By similarity).</text>
</comment>
<comment type="catalytic activity">
    <reaction>
        <text>Thiol-dependent hydrolysis of ester, thioester, amide, peptide and isopeptide bonds formed by the C-terminal Gly of ubiquitin (a 76-residue protein attached to proteins as an intracellular targeting signal).</text>
        <dbReference type="EC" id="3.4.19.12"/>
    </reaction>
</comment>
<comment type="similarity">
    <text evidence="5">Belongs to the peptidase C19 family.</text>
</comment>
<comment type="sequence caution" evidence="5">
    <conflict type="erroneous gene model prediction">
        <sequence resource="EMBL-CDS" id="BAB01045"/>
    </conflict>
</comment>
<gene>
    <name type="primary">UBP25</name>
    <name type="ordered locus">At3g14400</name>
    <name type="ORF">MLN21.18</name>
</gene>
<keyword id="KW-0378">Hydrolase</keyword>
<keyword id="KW-0645">Protease</keyword>
<keyword id="KW-1185">Reference proteome</keyword>
<keyword id="KW-0788">Thiol protease</keyword>
<keyword id="KW-0833">Ubl conjugation pathway</keyword>
<dbReference type="EC" id="3.4.19.12"/>
<dbReference type="EMBL" id="AF302673">
    <property type="protein sequence ID" value="AAG42763.1"/>
    <property type="molecule type" value="mRNA"/>
</dbReference>
<dbReference type="EMBL" id="AB022220">
    <property type="protein sequence ID" value="BAB01045.1"/>
    <property type="status" value="ALT_SEQ"/>
    <property type="molecule type" value="Genomic_DNA"/>
</dbReference>
<dbReference type="EMBL" id="CP002686">
    <property type="protein sequence ID" value="AEE75513.1"/>
    <property type="molecule type" value="Genomic_DNA"/>
</dbReference>
<dbReference type="EMBL" id="AY064992">
    <property type="protein sequence ID" value="AAL57643.1"/>
    <property type="molecule type" value="mRNA"/>
</dbReference>
<dbReference type="EMBL" id="BT021128">
    <property type="protein sequence ID" value="AAX22263.1"/>
    <property type="molecule type" value="mRNA"/>
</dbReference>
<dbReference type="RefSeq" id="NP_566486.1">
    <property type="nucleotide sequence ID" value="NM_112299.4"/>
</dbReference>
<dbReference type="SMR" id="Q9FPS2"/>
<dbReference type="BioGRID" id="5996">
    <property type="interactions" value="1"/>
</dbReference>
<dbReference type="FunCoup" id="Q9FPS2">
    <property type="interactions" value="442"/>
</dbReference>
<dbReference type="IntAct" id="Q9FPS2">
    <property type="interactions" value="1"/>
</dbReference>
<dbReference type="STRING" id="3702.Q9FPS2"/>
<dbReference type="MEROPS" id="C19.A13"/>
<dbReference type="iPTMnet" id="Q9FPS2"/>
<dbReference type="PaxDb" id="3702-AT3G14400.1"/>
<dbReference type="ProteomicsDB" id="234093"/>
<dbReference type="EnsemblPlants" id="AT3G14400.1">
    <property type="protein sequence ID" value="AT3G14400.1"/>
    <property type="gene ID" value="AT3G14400"/>
</dbReference>
<dbReference type="GeneID" id="820662"/>
<dbReference type="Gramene" id="AT3G14400.1">
    <property type="protein sequence ID" value="AT3G14400.1"/>
    <property type="gene ID" value="AT3G14400"/>
</dbReference>
<dbReference type="KEGG" id="ath:AT3G14400"/>
<dbReference type="Araport" id="AT3G14400"/>
<dbReference type="TAIR" id="AT3G14400">
    <property type="gene designation" value="UBP25"/>
</dbReference>
<dbReference type="eggNOG" id="KOG1865">
    <property type="taxonomic scope" value="Eukaryota"/>
</dbReference>
<dbReference type="HOGENOM" id="CLU_029502_0_0_1"/>
<dbReference type="InParanoid" id="Q9FPS2"/>
<dbReference type="OMA" id="MGFKLQM"/>
<dbReference type="PhylomeDB" id="Q9FPS2"/>
<dbReference type="PRO" id="PR:Q9FPS2"/>
<dbReference type="Proteomes" id="UP000006548">
    <property type="component" value="Chromosome 3"/>
</dbReference>
<dbReference type="ExpressionAtlas" id="Q9FPS2">
    <property type="expression patterns" value="baseline and differential"/>
</dbReference>
<dbReference type="GO" id="GO:0004843">
    <property type="term" value="F:cysteine-type deubiquitinase activity"/>
    <property type="evidence" value="ECO:0007669"/>
    <property type="project" value="UniProtKB-EC"/>
</dbReference>
<dbReference type="GO" id="GO:0016579">
    <property type="term" value="P:protein deubiquitination"/>
    <property type="evidence" value="ECO:0007669"/>
    <property type="project" value="InterPro"/>
</dbReference>
<dbReference type="GO" id="GO:0006508">
    <property type="term" value="P:proteolysis"/>
    <property type="evidence" value="ECO:0007669"/>
    <property type="project" value="UniProtKB-KW"/>
</dbReference>
<dbReference type="CDD" id="cd02661">
    <property type="entry name" value="Peptidase_C19E"/>
    <property type="match status" value="1"/>
</dbReference>
<dbReference type="FunFam" id="3.90.70.10:FF:000118">
    <property type="entry name" value="Ubiquitin carboxyl-terminal hydrolase 25"/>
    <property type="match status" value="1"/>
</dbReference>
<dbReference type="Gene3D" id="1.10.246.140">
    <property type="match status" value="1"/>
</dbReference>
<dbReference type="Gene3D" id="3.90.70.10">
    <property type="entry name" value="Cysteine proteinases"/>
    <property type="match status" value="1"/>
</dbReference>
<dbReference type="InterPro" id="IPR038765">
    <property type="entry name" value="Papain-like_cys_pep_sf"/>
</dbReference>
<dbReference type="InterPro" id="IPR050164">
    <property type="entry name" value="Peptidase_C19"/>
</dbReference>
<dbReference type="InterPro" id="IPR001394">
    <property type="entry name" value="Peptidase_C19_UCH"/>
</dbReference>
<dbReference type="InterPro" id="IPR038212">
    <property type="entry name" value="TF_EnY2_sf"/>
</dbReference>
<dbReference type="InterPro" id="IPR018200">
    <property type="entry name" value="USP_CS"/>
</dbReference>
<dbReference type="InterPro" id="IPR028889">
    <property type="entry name" value="USP_dom"/>
</dbReference>
<dbReference type="PANTHER" id="PTHR24006">
    <property type="entry name" value="UBIQUITIN CARBOXYL-TERMINAL HYDROLASE"/>
    <property type="match status" value="1"/>
</dbReference>
<dbReference type="PANTHER" id="PTHR24006:SF758">
    <property type="entry name" value="UBIQUITIN CARBOXYL-TERMINAL HYDROLASE 36"/>
    <property type="match status" value="1"/>
</dbReference>
<dbReference type="Pfam" id="PF00443">
    <property type="entry name" value="UCH"/>
    <property type="match status" value="1"/>
</dbReference>
<dbReference type="SUPFAM" id="SSF54001">
    <property type="entry name" value="Cysteine proteinases"/>
    <property type="match status" value="1"/>
</dbReference>
<dbReference type="PROSITE" id="PS00972">
    <property type="entry name" value="USP_1"/>
    <property type="match status" value="1"/>
</dbReference>
<dbReference type="PROSITE" id="PS00973">
    <property type="entry name" value="USP_2"/>
    <property type="match status" value="1"/>
</dbReference>
<dbReference type="PROSITE" id="PS50235">
    <property type="entry name" value="USP_3"/>
    <property type="match status" value="1"/>
</dbReference>
<reference key="1">
    <citation type="journal article" date="2000" name="Plant Physiol.">
        <title>The ubiquitin-specific protease family from Arabidopsis. AtUBP1 and 2 are required for the resistance to the amino acid analog canavanine.</title>
        <authorList>
            <person name="Yan N."/>
            <person name="Doelling J.H."/>
            <person name="Falbel T.G."/>
            <person name="Durski A.M."/>
            <person name="Vierstra R.D."/>
        </authorList>
    </citation>
    <scope>NUCLEOTIDE SEQUENCE [MRNA]</scope>
    <scope>GENE FAMILY ORGANIZATION</scope>
    <scope>NOMENCLATURE</scope>
    <source>
        <strain>cv. Columbia</strain>
    </source>
</reference>
<reference key="2">
    <citation type="journal article" date="2000" name="DNA Res.">
        <title>Structural analysis of Arabidopsis thaliana chromosome 3. I. Sequence features of the regions of 4,504,864 bp covered by sixty P1 and TAC clones.</title>
        <authorList>
            <person name="Sato S."/>
            <person name="Nakamura Y."/>
            <person name="Kaneko T."/>
            <person name="Katoh T."/>
            <person name="Asamizu E."/>
            <person name="Tabata S."/>
        </authorList>
    </citation>
    <scope>NUCLEOTIDE SEQUENCE [LARGE SCALE GENOMIC DNA]</scope>
    <source>
        <strain>cv. Columbia</strain>
    </source>
</reference>
<reference key="3">
    <citation type="journal article" date="2017" name="Plant J.">
        <title>Araport11: a complete reannotation of the Arabidopsis thaliana reference genome.</title>
        <authorList>
            <person name="Cheng C.Y."/>
            <person name="Krishnakumar V."/>
            <person name="Chan A.P."/>
            <person name="Thibaud-Nissen F."/>
            <person name="Schobel S."/>
            <person name="Town C.D."/>
        </authorList>
    </citation>
    <scope>GENOME REANNOTATION</scope>
    <source>
        <strain>cv. Columbia</strain>
    </source>
</reference>
<reference key="4">
    <citation type="journal article" date="2003" name="Science">
        <title>Empirical analysis of transcriptional activity in the Arabidopsis genome.</title>
        <authorList>
            <person name="Yamada K."/>
            <person name="Lim J."/>
            <person name="Dale J.M."/>
            <person name="Chen H."/>
            <person name="Shinn P."/>
            <person name="Palm C.J."/>
            <person name="Southwick A.M."/>
            <person name="Wu H.C."/>
            <person name="Kim C.J."/>
            <person name="Nguyen M."/>
            <person name="Pham P.K."/>
            <person name="Cheuk R.F."/>
            <person name="Karlin-Newmann G."/>
            <person name="Liu S.X."/>
            <person name="Lam B."/>
            <person name="Sakano H."/>
            <person name="Wu T."/>
            <person name="Yu G."/>
            <person name="Miranda M."/>
            <person name="Quach H.L."/>
            <person name="Tripp M."/>
            <person name="Chang C.H."/>
            <person name="Lee J.M."/>
            <person name="Toriumi M.J."/>
            <person name="Chan M.M."/>
            <person name="Tang C.C."/>
            <person name="Onodera C.S."/>
            <person name="Deng J.M."/>
            <person name="Akiyama K."/>
            <person name="Ansari Y."/>
            <person name="Arakawa T."/>
            <person name="Banh J."/>
            <person name="Banno F."/>
            <person name="Bowser L."/>
            <person name="Brooks S.Y."/>
            <person name="Carninci P."/>
            <person name="Chao Q."/>
            <person name="Choy N."/>
            <person name="Enju A."/>
            <person name="Goldsmith A.D."/>
            <person name="Gurjal M."/>
            <person name="Hansen N.F."/>
            <person name="Hayashizaki Y."/>
            <person name="Johnson-Hopson C."/>
            <person name="Hsuan V.W."/>
            <person name="Iida K."/>
            <person name="Karnes M."/>
            <person name="Khan S."/>
            <person name="Koesema E."/>
            <person name="Ishida J."/>
            <person name="Jiang P.X."/>
            <person name="Jones T."/>
            <person name="Kawai J."/>
            <person name="Kamiya A."/>
            <person name="Meyers C."/>
            <person name="Nakajima M."/>
            <person name="Narusaka M."/>
            <person name="Seki M."/>
            <person name="Sakurai T."/>
            <person name="Satou M."/>
            <person name="Tamse R."/>
            <person name="Vaysberg M."/>
            <person name="Wallender E.K."/>
            <person name="Wong C."/>
            <person name="Yamamura Y."/>
            <person name="Yuan S."/>
            <person name="Shinozaki K."/>
            <person name="Davis R.W."/>
            <person name="Theologis A."/>
            <person name="Ecker J.R."/>
        </authorList>
    </citation>
    <scope>NUCLEOTIDE SEQUENCE [LARGE SCALE MRNA]</scope>
    <source>
        <strain>cv. Columbia</strain>
    </source>
</reference>
<sequence>MGFKLQMSWMPSLLSQKRRNGPPLGLRNLGNTCYLNSVLQCLTFTPPLANFCLTHKHSSHCDTYVDGERKRDCPFCIVEKRIARSLSVDLTTDAPNKISSCLKIFAEHFKLGRQEDAHEFLRYVIDACHNTSLRLKKLRYNGNEPFNGNSVVKEIFGGALQSQVKCLSCGAESNKADEIMDISLEILQSSSVKESLQKFFQSEILDGNNKYRCESCEKLVTARKQMSILQAPNILVIQLKRFGGIFGGKIDKAISFGEILVLSNFMSKASKDPQPEYKLFGIIVHSGFSPESGHYYAYVKDSLGRWYCCNDSFVSLSTLQEVLSEKAYILFFSRSNQRPASAKTLVTSNGTTSHEVNGCETSNPQKFIGPLNGFNMKPQAEQSFQKGNLASSKPHKFIRPKPRAEQAPLEDNLLSSKVEKAPLRPHAKVSISVNLGAKRVSPVNGRLSFHQDENIAPKANKENSVSVLPTKVNSGTERKFGTENGGNGVKENGSAPGSSNHKVALHPHERSNGSSNGGDHHKDNLHPCGSNGSQNGTAHPETERNGVSTTQSKGLCSSTKEDPCILLRKDESSRNELEAIKESLKKDALSHLRSCGWYDKVLISMHAKKRLRTEQSGGEDGSDLKRRLIEDVKSSLKSQIPEELKADLVNRIWEISKKKYS</sequence>
<proteinExistence type="evidence at transcript level"/>
<feature type="chain" id="PRO_0000313051" description="Ubiquitin carboxyl-terminal hydrolase 25">
    <location>
        <begin position="1"/>
        <end position="661"/>
    </location>
</feature>
<feature type="domain" description="USP">
    <location>
        <begin position="24"/>
        <end position="335"/>
    </location>
</feature>
<feature type="region of interest" description="Disordered" evidence="4">
    <location>
        <begin position="387"/>
        <end position="406"/>
    </location>
</feature>
<feature type="region of interest" description="Disordered" evidence="4">
    <location>
        <begin position="449"/>
        <end position="558"/>
    </location>
</feature>
<feature type="compositionally biased region" description="Basic and acidic residues" evidence="4">
    <location>
        <begin position="449"/>
        <end position="461"/>
    </location>
</feature>
<feature type="compositionally biased region" description="Polar residues" evidence="4">
    <location>
        <begin position="462"/>
        <end position="475"/>
    </location>
</feature>
<feature type="compositionally biased region" description="Polar residues" evidence="4">
    <location>
        <begin position="545"/>
        <end position="558"/>
    </location>
</feature>
<feature type="active site" description="Nucleophile" evidence="2 3">
    <location>
        <position position="33"/>
    </location>
</feature>
<feature type="active site" description="Proton acceptor" evidence="2 3">
    <location>
        <position position="294"/>
    </location>
</feature>
<feature type="sequence conflict" description="In Ref. 4; AAL57643." evidence="5" ref="4">
    <original>Q</original>
    <variation>E</variation>
    <location>
        <position position="114"/>
    </location>
</feature>
<accession>Q9FPS2</accession>
<accession>Q8VZF5</accession>
<accession>Q9LUK9</accession>
<protein>
    <recommendedName>
        <fullName>Ubiquitin carboxyl-terminal hydrolase 25</fullName>
        <ecNumber>3.4.19.12</ecNumber>
    </recommendedName>
    <alternativeName>
        <fullName>Deubiquitinating enzyme 25</fullName>
        <shortName>AtUBP25</shortName>
    </alternativeName>
    <alternativeName>
        <fullName>Ubiquitin thioesterase 25</fullName>
    </alternativeName>
    <alternativeName>
        <fullName>Ubiquitin-specific-processing protease 25</fullName>
    </alternativeName>
</protein>